<name>SRSF3_BOVIN</name>
<reference key="1">
    <citation type="submission" date="2005-08" db="EMBL/GenBank/DDBJ databases">
        <authorList>
            <consortium name="NIH - Mammalian Gene Collection (MGC) project"/>
        </authorList>
    </citation>
    <scope>NUCLEOTIDE SEQUENCE [LARGE SCALE MRNA]</scope>
    <source>
        <strain>Crossbred X Angus</strain>
        <tissue>Liver</tissue>
    </source>
</reference>
<comment type="function">
    <text evidence="1">Splicing factor, which binds the consensus motif 5'-C[ACU][AU]C[ACU][AC]C-3' within pre-mRNA and promotes specific exons inclusion during alternative splicing. Interaction with YTHDC1, a RNA-binding protein that recognizes and binds N6-methyladenosine (m6A)-containing RNAs, promotes recruitment of SRSF3 to its mRNA-binding elements adjacent to m6A sites within exons. Also functions as an adapter involved in mRNA nuclear export. Binds mRNA which is thought to be transferred to the NXF1-NXT1 heterodimer for export (TAP/NXF1 pathway); enhances NXF1-NXT1 RNA-binding activity. Involved in nuclear export of m6A-containing mRNAs via interaction with YTHDC1: interaction with YTHDC1 facilitates m6A-containing mRNA-binding to both SRSF3 and NXF1, promoting mRNA nuclear export.</text>
</comment>
<comment type="subunit">
    <text evidence="1">Interacts with CPSF6. Interacts with RBMY1A1. Interacts with SREK1/SFRS12. Interacts with NXF1. Interacts with YTHDC1, leading to recruitment to RNA elements adjacent to m6A sites. Interacts with SRSP; increases SRSF3 binding to specific exons.</text>
</comment>
<comment type="subcellular location">
    <subcellularLocation>
        <location evidence="1">Nucleus</location>
    </subcellularLocation>
    <subcellularLocation>
        <location evidence="1">Nucleus speckle</location>
    </subcellularLocation>
    <subcellularLocation>
        <location evidence="1">Cytoplasm</location>
    </subcellularLocation>
    <text evidence="1">Recruited to nuclear speckles following interaction with YTHDC1.</text>
</comment>
<comment type="PTM">
    <text evidence="2">Phosphorylated by CLK1, CLK2, CLK3 and CLK4. Extensively phosphorylated on serine residues in the RS domain.</text>
</comment>
<comment type="similarity">
    <text evidence="5">Belongs to the splicing factor SR family.</text>
</comment>
<evidence type="ECO:0000250" key="1">
    <source>
        <dbReference type="UniProtKB" id="P84103"/>
    </source>
</evidence>
<evidence type="ECO:0000250" key="2">
    <source>
        <dbReference type="UniProtKB" id="P84104"/>
    </source>
</evidence>
<evidence type="ECO:0000255" key="3">
    <source>
        <dbReference type="PROSITE-ProRule" id="PRU00176"/>
    </source>
</evidence>
<evidence type="ECO:0000256" key="4">
    <source>
        <dbReference type="SAM" id="MobiDB-lite"/>
    </source>
</evidence>
<evidence type="ECO:0000305" key="5"/>
<protein>
    <recommendedName>
        <fullName>Serine/arginine-rich splicing factor 3</fullName>
    </recommendedName>
    <alternativeName>
        <fullName>Splicing factor, arginine/serine-rich 3</fullName>
    </alternativeName>
</protein>
<accession>Q3SZR8</accession>
<keyword id="KW-0007">Acetylation</keyword>
<keyword id="KW-0963">Cytoplasm</keyword>
<keyword id="KW-0507">mRNA processing</keyword>
<keyword id="KW-0508">mRNA splicing</keyword>
<keyword id="KW-0509">mRNA transport</keyword>
<keyword id="KW-0539">Nucleus</keyword>
<keyword id="KW-0597">Phosphoprotein</keyword>
<keyword id="KW-1185">Reference proteome</keyword>
<keyword id="KW-0677">Repeat</keyword>
<keyword id="KW-0694">RNA-binding</keyword>
<keyword id="KW-0813">Transport</keyword>
<gene>
    <name type="primary">SRSF3</name>
    <name type="synonym">SFRS3</name>
</gene>
<sequence>MHRDSCPLDCKVYVGNLGNNGNKTELERAFGYYGPLRSVWVARNPPGFAFVEFEDPRDAADAVRELDGRTLCGCRVRVELSNGEKRSRNRGPPPSWGRRPRDDYRRRSPPPRRRSPRRRSFSRSRSRSLSRDRRRERSLSRERNHKPSRSFSRSRSRSRSNERK</sequence>
<proteinExistence type="evidence at transcript level"/>
<feature type="chain" id="PRO_0000287723" description="Serine/arginine-rich splicing factor 3">
    <location>
        <begin position="1"/>
        <end position="164"/>
    </location>
</feature>
<feature type="domain" description="RRM" evidence="3">
    <location>
        <begin position="10"/>
        <end position="83"/>
    </location>
</feature>
<feature type="repeat" description="B-1">
    <location>
        <begin position="119"/>
        <end position="133"/>
    </location>
</feature>
<feature type="repeat" description="B-2">
    <location>
        <begin position="149"/>
        <end position="164"/>
    </location>
</feature>
<feature type="region of interest" description="Sufficient for interaction with NXF1 and SRSP" evidence="1">
    <location>
        <begin position="1"/>
        <end position="90"/>
    </location>
</feature>
<feature type="region of interest" description="Disordered" evidence="4">
    <location>
        <begin position="81"/>
        <end position="164"/>
    </location>
</feature>
<feature type="region of interest" description="2 X approximate repeats, basic">
    <location>
        <begin position="119"/>
        <end position="164"/>
    </location>
</feature>
<feature type="compositionally biased region" description="Basic residues" evidence="4">
    <location>
        <begin position="107"/>
        <end position="128"/>
    </location>
</feature>
<feature type="compositionally biased region" description="Basic and acidic residues" evidence="4">
    <location>
        <begin position="129"/>
        <end position="142"/>
    </location>
</feature>
<feature type="compositionally biased region" description="Basic residues" evidence="4">
    <location>
        <begin position="143"/>
        <end position="158"/>
    </location>
</feature>
<feature type="modified residue" description="N-acetylmethionine" evidence="1">
    <location>
        <position position="1"/>
    </location>
</feature>
<feature type="modified residue" description="Phosphoserine" evidence="1">
    <location>
        <position position="5"/>
    </location>
</feature>
<feature type="modified residue" description="N6-acetyllysine" evidence="1">
    <location>
        <position position="23"/>
    </location>
</feature>
<dbReference type="EMBL" id="BC102735">
    <property type="protein sequence ID" value="AAI02736.1"/>
    <property type="molecule type" value="mRNA"/>
</dbReference>
<dbReference type="RefSeq" id="NP_001029872.1">
    <property type="nucleotide sequence ID" value="NM_001034700.2"/>
</dbReference>
<dbReference type="SMR" id="Q3SZR8"/>
<dbReference type="FunCoup" id="Q3SZR8">
    <property type="interactions" value="3060"/>
</dbReference>
<dbReference type="IntAct" id="Q3SZR8">
    <property type="interactions" value="1"/>
</dbReference>
<dbReference type="STRING" id="9913.ENSBTAP00000049550"/>
<dbReference type="PaxDb" id="9913-ENSBTAP00000049550"/>
<dbReference type="PeptideAtlas" id="Q3SZR8"/>
<dbReference type="Ensembl" id="ENSBTAT00000051953.3">
    <property type="protein sequence ID" value="ENSBTAP00000049550.2"/>
    <property type="gene ID" value="ENSBTAG00000040006.3"/>
</dbReference>
<dbReference type="GeneID" id="540276"/>
<dbReference type="KEGG" id="bta:540276"/>
<dbReference type="CTD" id="6428"/>
<dbReference type="VEuPathDB" id="HostDB:ENSBTAG00000040006"/>
<dbReference type="VGNC" id="VGNC:35301">
    <property type="gene designation" value="SRSF3"/>
</dbReference>
<dbReference type="eggNOG" id="KOG0107">
    <property type="taxonomic scope" value="Eukaryota"/>
</dbReference>
<dbReference type="GeneTree" id="ENSGT00910000144115"/>
<dbReference type="HOGENOM" id="CLU_012062_20_2_1"/>
<dbReference type="InParanoid" id="Q3SZR8"/>
<dbReference type="OMA" id="EMHRDSC"/>
<dbReference type="OrthoDB" id="5970at2759"/>
<dbReference type="TreeFam" id="TF351858"/>
<dbReference type="Reactome" id="R-BTA-159236">
    <property type="pathway name" value="Transport of Mature mRNA derived from an Intron-Containing Transcript"/>
</dbReference>
<dbReference type="Reactome" id="R-BTA-72163">
    <property type="pathway name" value="mRNA Splicing - Major Pathway"/>
</dbReference>
<dbReference type="Reactome" id="R-BTA-72187">
    <property type="pathway name" value="mRNA 3'-end processing"/>
</dbReference>
<dbReference type="Reactome" id="R-BTA-72203">
    <property type="pathway name" value="Processing of Capped Intron-Containing Pre-mRNA"/>
</dbReference>
<dbReference type="Reactome" id="R-BTA-73856">
    <property type="pathway name" value="RNA Polymerase II Transcription Termination"/>
</dbReference>
<dbReference type="Proteomes" id="UP000009136">
    <property type="component" value="Chromosome 23"/>
</dbReference>
<dbReference type="Bgee" id="ENSBTAG00000040006">
    <property type="expression patterns" value="Expressed in spermatid and 108 other cell types or tissues"/>
</dbReference>
<dbReference type="GO" id="GO:0005737">
    <property type="term" value="C:cytoplasm"/>
    <property type="evidence" value="ECO:0007669"/>
    <property type="project" value="UniProtKB-SubCell"/>
</dbReference>
<dbReference type="GO" id="GO:0016607">
    <property type="term" value="C:nuclear speck"/>
    <property type="evidence" value="ECO:0000250"/>
    <property type="project" value="UniProtKB"/>
</dbReference>
<dbReference type="GO" id="GO:0003729">
    <property type="term" value="F:mRNA binding"/>
    <property type="evidence" value="ECO:0000318"/>
    <property type="project" value="GO_Central"/>
</dbReference>
<dbReference type="GO" id="GO:0160134">
    <property type="term" value="F:protein-RNA sequence-specific adaptor activity"/>
    <property type="evidence" value="ECO:0000250"/>
    <property type="project" value="UniProtKB"/>
</dbReference>
<dbReference type="GO" id="GO:0003723">
    <property type="term" value="F:RNA binding"/>
    <property type="evidence" value="ECO:0000250"/>
    <property type="project" value="UniProtKB"/>
</dbReference>
<dbReference type="GO" id="GO:0045292">
    <property type="term" value="P:mRNA cis splicing, via spliceosome"/>
    <property type="evidence" value="ECO:0000318"/>
    <property type="project" value="GO_Central"/>
</dbReference>
<dbReference type="GO" id="GO:0006406">
    <property type="term" value="P:mRNA export from nucleus"/>
    <property type="evidence" value="ECO:0000250"/>
    <property type="project" value="UniProtKB"/>
</dbReference>
<dbReference type="GO" id="GO:0048024">
    <property type="term" value="P:regulation of mRNA splicing, via spliceosome"/>
    <property type="evidence" value="ECO:0000250"/>
    <property type="project" value="UniProtKB"/>
</dbReference>
<dbReference type="CDD" id="cd12645">
    <property type="entry name" value="RRM_SRSF3"/>
    <property type="match status" value="1"/>
</dbReference>
<dbReference type="FunFam" id="3.30.70.330:FF:000352">
    <property type="entry name" value="Putative serine/arginine-rich splicing factor 3"/>
    <property type="match status" value="1"/>
</dbReference>
<dbReference type="Gene3D" id="3.30.70.330">
    <property type="match status" value="1"/>
</dbReference>
<dbReference type="InterPro" id="IPR012677">
    <property type="entry name" value="Nucleotide-bd_a/b_plait_sf"/>
</dbReference>
<dbReference type="InterPro" id="IPR035979">
    <property type="entry name" value="RBD_domain_sf"/>
</dbReference>
<dbReference type="InterPro" id="IPR000504">
    <property type="entry name" value="RRM_dom"/>
</dbReference>
<dbReference type="InterPro" id="IPR050907">
    <property type="entry name" value="SRSF"/>
</dbReference>
<dbReference type="PANTHER" id="PTHR23147">
    <property type="entry name" value="SERINE/ARGININE RICH SPLICING FACTOR"/>
    <property type="match status" value="1"/>
</dbReference>
<dbReference type="Pfam" id="PF00076">
    <property type="entry name" value="RRM_1"/>
    <property type="match status" value="1"/>
</dbReference>
<dbReference type="SMART" id="SM00360">
    <property type="entry name" value="RRM"/>
    <property type="match status" value="1"/>
</dbReference>
<dbReference type="SUPFAM" id="SSF54928">
    <property type="entry name" value="RNA-binding domain, RBD"/>
    <property type="match status" value="1"/>
</dbReference>
<dbReference type="PROSITE" id="PS50102">
    <property type="entry name" value="RRM"/>
    <property type="match status" value="1"/>
</dbReference>
<organism>
    <name type="scientific">Bos taurus</name>
    <name type="common">Bovine</name>
    <dbReference type="NCBI Taxonomy" id="9913"/>
    <lineage>
        <taxon>Eukaryota</taxon>
        <taxon>Metazoa</taxon>
        <taxon>Chordata</taxon>
        <taxon>Craniata</taxon>
        <taxon>Vertebrata</taxon>
        <taxon>Euteleostomi</taxon>
        <taxon>Mammalia</taxon>
        <taxon>Eutheria</taxon>
        <taxon>Laurasiatheria</taxon>
        <taxon>Artiodactyla</taxon>
        <taxon>Ruminantia</taxon>
        <taxon>Pecora</taxon>
        <taxon>Bovidae</taxon>
        <taxon>Bovinae</taxon>
        <taxon>Bos</taxon>
    </lineage>
</organism>